<proteinExistence type="inferred from homology"/>
<dbReference type="EMBL" id="CP001113">
    <property type="protein sequence ID" value="ACF61313.1"/>
    <property type="molecule type" value="Genomic_DNA"/>
</dbReference>
<dbReference type="RefSeq" id="WP_000887832.1">
    <property type="nucleotide sequence ID" value="NZ_CCMR01000003.1"/>
</dbReference>
<dbReference type="SMR" id="B4T2N5"/>
<dbReference type="GeneID" id="66758552"/>
<dbReference type="KEGG" id="see:SNSL254_A4685"/>
<dbReference type="HOGENOM" id="CLU_098807_3_0_6"/>
<dbReference type="Proteomes" id="UP000008824">
    <property type="component" value="Chromosome"/>
</dbReference>
<dbReference type="GO" id="GO:0005737">
    <property type="term" value="C:cytoplasm"/>
    <property type="evidence" value="ECO:0007669"/>
    <property type="project" value="UniProtKB-SubCell"/>
</dbReference>
<dbReference type="GO" id="GO:0005507">
    <property type="term" value="F:copper ion binding"/>
    <property type="evidence" value="ECO:0007669"/>
    <property type="project" value="UniProtKB-UniRule"/>
</dbReference>
<dbReference type="GO" id="GO:0010038">
    <property type="term" value="P:response to metal ion"/>
    <property type="evidence" value="ECO:0007669"/>
    <property type="project" value="InterPro"/>
</dbReference>
<dbReference type="FunFam" id="3.30.70.120:FF:000004">
    <property type="entry name" value="Divalent-cation tolerance protein CutA"/>
    <property type="match status" value="1"/>
</dbReference>
<dbReference type="Gene3D" id="3.30.70.120">
    <property type="match status" value="1"/>
</dbReference>
<dbReference type="HAMAP" id="MF_01160">
    <property type="entry name" value="CutA"/>
    <property type="match status" value="1"/>
</dbReference>
<dbReference type="InterPro" id="IPR023700">
    <property type="entry name" value="CutA_Enterobact"/>
</dbReference>
<dbReference type="InterPro" id="IPR004323">
    <property type="entry name" value="Ion_tolerance_CutA"/>
</dbReference>
<dbReference type="InterPro" id="IPR011322">
    <property type="entry name" value="N-reg_PII-like_a/b"/>
</dbReference>
<dbReference type="InterPro" id="IPR015867">
    <property type="entry name" value="N-reg_PII/ATP_PRibTrfase_C"/>
</dbReference>
<dbReference type="NCBIfam" id="NF007930">
    <property type="entry name" value="PRK10645.1"/>
    <property type="match status" value="1"/>
</dbReference>
<dbReference type="PANTHER" id="PTHR23419">
    <property type="entry name" value="DIVALENT CATION TOLERANCE CUTA-RELATED"/>
    <property type="match status" value="1"/>
</dbReference>
<dbReference type="PANTHER" id="PTHR23419:SF8">
    <property type="entry name" value="FI09726P"/>
    <property type="match status" value="1"/>
</dbReference>
<dbReference type="Pfam" id="PF03091">
    <property type="entry name" value="CutA1"/>
    <property type="match status" value="1"/>
</dbReference>
<dbReference type="SUPFAM" id="SSF54913">
    <property type="entry name" value="GlnB-like"/>
    <property type="match status" value="1"/>
</dbReference>
<evidence type="ECO:0000255" key="1">
    <source>
        <dbReference type="HAMAP-Rule" id="MF_01160"/>
    </source>
</evidence>
<feature type="chain" id="PRO_1000137852" description="Divalent-cation tolerance protein CutA">
    <location>
        <begin position="1"/>
        <end position="115"/>
    </location>
</feature>
<feature type="binding site" evidence="1">
    <location>
        <position position="19"/>
    </location>
    <ligand>
        <name>Cu cation</name>
        <dbReference type="ChEBI" id="CHEBI:23378"/>
    </ligand>
</feature>
<feature type="binding site" evidence="1">
    <location>
        <position position="86"/>
    </location>
    <ligand>
        <name>Cu cation</name>
        <dbReference type="ChEBI" id="CHEBI:23378"/>
    </ligand>
</feature>
<feature type="binding site" evidence="1">
    <location>
        <position position="87"/>
    </location>
    <ligand>
        <name>Cu cation</name>
        <dbReference type="ChEBI" id="CHEBI:23378"/>
    </ligand>
</feature>
<keyword id="KW-0186">Copper</keyword>
<keyword id="KW-0963">Cytoplasm</keyword>
<keyword id="KW-0479">Metal-binding</keyword>
<accession>B4T2N5</accession>
<organism>
    <name type="scientific">Salmonella newport (strain SL254)</name>
    <dbReference type="NCBI Taxonomy" id="423368"/>
    <lineage>
        <taxon>Bacteria</taxon>
        <taxon>Pseudomonadati</taxon>
        <taxon>Pseudomonadota</taxon>
        <taxon>Gammaproteobacteria</taxon>
        <taxon>Enterobacterales</taxon>
        <taxon>Enterobacteriaceae</taxon>
        <taxon>Salmonella</taxon>
    </lineage>
</organism>
<comment type="function">
    <text evidence="1">Involved in resistance toward heavy metals.</text>
</comment>
<comment type="cofactor">
    <cofactor evidence="1">
        <name>Cu cation</name>
        <dbReference type="ChEBI" id="CHEBI:23378"/>
    </cofactor>
    <text evidence="1">Binds 1 copper ion per subunit.</text>
</comment>
<comment type="subunit">
    <text evidence="1">Homotrimer.</text>
</comment>
<comment type="subcellular location">
    <subcellularLocation>
        <location evidence="1">Cytoplasm</location>
    </subcellularLocation>
</comment>
<comment type="similarity">
    <text evidence="1">Belongs to the CutA family.</text>
</comment>
<sequence length="115" mass="12681">MLDVKSQDISIPEAVVVLCTAPDEATAQDLAAKVLAEKLAACATLLPGATSLYYWEGKLEQEYEVQMILKTTVSHQQALIDCLKSHHPYQTPELLVLPVTHGDTDYLSWLNASLR</sequence>
<protein>
    <recommendedName>
        <fullName evidence="1">Divalent-cation tolerance protein CutA</fullName>
    </recommendedName>
</protein>
<gene>
    <name evidence="1" type="primary">cutA</name>
    <name type="ordered locus">SNSL254_A4685</name>
</gene>
<reference key="1">
    <citation type="journal article" date="2011" name="J. Bacteriol.">
        <title>Comparative genomics of 28 Salmonella enterica isolates: evidence for CRISPR-mediated adaptive sublineage evolution.</title>
        <authorList>
            <person name="Fricke W.F."/>
            <person name="Mammel M.K."/>
            <person name="McDermott P.F."/>
            <person name="Tartera C."/>
            <person name="White D.G."/>
            <person name="Leclerc J.E."/>
            <person name="Ravel J."/>
            <person name="Cebula T.A."/>
        </authorList>
    </citation>
    <scope>NUCLEOTIDE SEQUENCE [LARGE SCALE GENOMIC DNA]</scope>
    <source>
        <strain>SL254</strain>
    </source>
</reference>
<name>CUTA_SALNS</name>